<gene>
    <name evidence="1" type="primary">kdsB</name>
    <name type="ordered locus">RPC_3731</name>
</gene>
<reference key="1">
    <citation type="submission" date="2006-03" db="EMBL/GenBank/DDBJ databases">
        <title>Complete sequence of Rhodopseudomonas palustris BisB18.</title>
        <authorList>
            <consortium name="US DOE Joint Genome Institute"/>
            <person name="Copeland A."/>
            <person name="Lucas S."/>
            <person name="Lapidus A."/>
            <person name="Barry K."/>
            <person name="Detter J.C."/>
            <person name="Glavina del Rio T."/>
            <person name="Hammon N."/>
            <person name="Israni S."/>
            <person name="Dalin E."/>
            <person name="Tice H."/>
            <person name="Pitluck S."/>
            <person name="Chain P."/>
            <person name="Malfatti S."/>
            <person name="Shin M."/>
            <person name="Vergez L."/>
            <person name="Schmutz J."/>
            <person name="Larimer F."/>
            <person name="Land M."/>
            <person name="Hauser L."/>
            <person name="Pelletier D.A."/>
            <person name="Kyrpides N."/>
            <person name="Anderson I."/>
            <person name="Oda Y."/>
            <person name="Harwood C.S."/>
            <person name="Richardson P."/>
        </authorList>
    </citation>
    <scope>NUCLEOTIDE SEQUENCE [LARGE SCALE GENOMIC DNA]</scope>
    <source>
        <strain>BisB18</strain>
    </source>
</reference>
<organism>
    <name type="scientific">Rhodopseudomonas palustris (strain BisB18)</name>
    <dbReference type="NCBI Taxonomy" id="316056"/>
    <lineage>
        <taxon>Bacteria</taxon>
        <taxon>Pseudomonadati</taxon>
        <taxon>Pseudomonadota</taxon>
        <taxon>Alphaproteobacteria</taxon>
        <taxon>Hyphomicrobiales</taxon>
        <taxon>Nitrobacteraceae</taxon>
        <taxon>Rhodopseudomonas</taxon>
    </lineage>
</organism>
<sequence>MTETKTLVLIPARMAATRLPGKPLMDIAGLPMIVHVLRRAEAAAIGPVAVATDTAEIADVVTAHGGRVVMTRADHPSGSDRIFEALSKLDPDGAVETVVNLQGDFPTIQPDNIRAVLEPLADPAVDIATLAAQIHTEEESLNPNVVKVIGSPLGDRRLRALYFTRATAPWGDGPRYHHIGLYAYRRAALQRFVSLPPSPLERREKLEQLRALEAGMRIDVGIVDAVPRGVDTAADLETARRVLAH</sequence>
<feature type="chain" id="PRO_0000370137" description="3-deoxy-manno-octulosonate cytidylyltransferase">
    <location>
        <begin position="1"/>
        <end position="245"/>
    </location>
</feature>
<keyword id="KW-0963">Cytoplasm</keyword>
<keyword id="KW-0448">Lipopolysaccharide biosynthesis</keyword>
<keyword id="KW-0548">Nucleotidyltransferase</keyword>
<keyword id="KW-0808">Transferase</keyword>
<dbReference type="EC" id="2.7.7.38" evidence="1"/>
<dbReference type="EMBL" id="CP000301">
    <property type="protein sequence ID" value="ABD89266.1"/>
    <property type="molecule type" value="Genomic_DNA"/>
</dbReference>
<dbReference type="SMR" id="Q210C0"/>
<dbReference type="STRING" id="316056.RPC_3731"/>
<dbReference type="KEGG" id="rpc:RPC_3731"/>
<dbReference type="eggNOG" id="COG1212">
    <property type="taxonomic scope" value="Bacteria"/>
</dbReference>
<dbReference type="HOGENOM" id="CLU_065038_0_1_5"/>
<dbReference type="OrthoDB" id="9815559at2"/>
<dbReference type="UniPathway" id="UPA00030"/>
<dbReference type="UniPathway" id="UPA00358">
    <property type="reaction ID" value="UER00476"/>
</dbReference>
<dbReference type="GO" id="GO:0005829">
    <property type="term" value="C:cytosol"/>
    <property type="evidence" value="ECO:0007669"/>
    <property type="project" value="TreeGrafter"/>
</dbReference>
<dbReference type="GO" id="GO:0008690">
    <property type="term" value="F:3-deoxy-manno-octulosonate cytidylyltransferase activity"/>
    <property type="evidence" value="ECO:0007669"/>
    <property type="project" value="UniProtKB-UniRule"/>
</dbReference>
<dbReference type="GO" id="GO:0033468">
    <property type="term" value="P:CMP-keto-3-deoxy-D-manno-octulosonic acid biosynthetic process"/>
    <property type="evidence" value="ECO:0007669"/>
    <property type="project" value="UniProtKB-UniRule"/>
</dbReference>
<dbReference type="GO" id="GO:0009103">
    <property type="term" value="P:lipopolysaccharide biosynthetic process"/>
    <property type="evidence" value="ECO:0007669"/>
    <property type="project" value="UniProtKB-UniRule"/>
</dbReference>
<dbReference type="CDD" id="cd02517">
    <property type="entry name" value="CMP-KDO-Synthetase"/>
    <property type="match status" value="1"/>
</dbReference>
<dbReference type="Gene3D" id="3.90.550.10">
    <property type="entry name" value="Spore Coat Polysaccharide Biosynthesis Protein SpsA, Chain A"/>
    <property type="match status" value="1"/>
</dbReference>
<dbReference type="HAMAP" id="MF_00057">
    <property type="entry name" value="KdsB"/>
    <property type="match status" value="1"/>
</dbReference>
<dbReference type="InterPro" id="IPR003329">
    <property type="entry name" value="Cytidylyl_trans"/>
</dbReference>
<dbReference type="InterPro" id="IPR004528">
    <property type="entry name" value="KdsB"/>
</dbReference>
<dbReference type="InterPro" id="IPR029044">
    <property type="entry name" value="Nucleotide-diphossugar_trans"/>
</dbReference>
<dbReference type="NCBIfam" id="TIGR00466">
    <property type="entry name" value="kdsB"/>
    <property type="match status" value="1"/>
</dbReference>
<dbReference type="NCBIfam" id="NF003948">
    <property type="entry name" value="PRK05450.1-1"/>
    <property type="match status" value="1"/>
</dbReference>
<dbReference type="NCBIfam" id="NF003952">
    <property type="entry name" value="PRK05450.1-5"/>
    <property type="match status" value="1"/>
</dbReference>
<dbReference type="PANTHER" id="PTHR42866">
    <property type="entry name" value="3-DEOXY-MANNO-OCTULOSONATE CYTIDYLYLTRANSFERASE"/>
    <property type="match status" value="1"/>
</dbReference>
<dbReference type="PANTHER" id="PTHR42866:SF2">
    <property type="entry name" value="3-DEOXY-MANNO-OCTULOSONATE CYTIDYLYLTRANSFERASE, MITOCHONDRIAL"/>
    <property type="match status" value="1"/>
</dbReference>
<dbReference type="Pfam" id="PF02348">
    <property type="entry name" value="CTP_transf_3"/>
    <property type="match status" value="1"/>
</dbReference>
<dbReference type="SUPFAM" id="SSF53448">
    <property type="entry name" value="Nucleotide-diphospho-sugar transferases"/>
    <property type="match status" value="1"/>
</dbReference>
<accession>Q210C0</accession>
<evidence type="ECO:0000255" key="1">
    <source>
        <dbReference type="HAMAP-Rule" id="MF_00057"/>
    </source>
</evidence>
<protein>
    <recommendedName>
        <fullName evidence="1">3-deoxy-manno-octulosonate cytidylyltransferase</fullName>
        <ecNumber evidence="1">2.7.7.38</ecNumber>
    </recommendedName>
    <alternativeName>
        <fullName evidence="1">CMP-2-keto-3-deoxyoctulosonic acid synthase</fullName>
        <shortName evidence="1">CKS</shortName>
        <shortName evidence="1">CMP-KDO synthase</shortName>
    </alternativeName>
</protein>
<comment type="function">
    <text evidence="1">Activates KDO (a required 8-carbon sugar) for incorporation into bacterial lipopolysaccharide in Gram-negative bacteria.</text>
</comment>
<comment type="catalytic activity">
    <reaction evidence="1">
        <text>3-deoxy-alpha-D-manno-oct-2-ulosonate + CTP = CMP-3-deoxy-beta-D-manno-octulosonate + diphosphate</text>
        <dbReference type="Rhea" id="RHEA:23448"/>
        <dbReference type="ChEBI" id="CHEBI:33019"/>
        <dbReference type="ChEBI" id="CHEBI:37563"/>
        <dbReference type="ChEBI" id="CHEBI:85986"/>
        <dbReference type="ChEBI" id="CHEBI:85987"/>
        <dbReference type="EC" id="2.7.7.38"/>
    </reaction>
</comment>
<comment type="pathway">
    <text evidence="1">Nucleotide-sugar biosynthesis; CMP-3-deoxy-D-manno-octulosonate biosynthesis; CMP-3-deoxy-D-manno-octulosonate from 3-deoxy-D-manno-octulosonate and CTP: step 1/1.</text>
</comment>
<comment type="pathway">
    <text evidence="1">Bacterial outer membrane biogenesis; lipopolysaccharide biosynthesis.</text>
</comment>
<comment type="subcellular location">
    <subcellularLocation>
        <location evidence="1">Cytoplasm</location>
    </subcellularLocation>
</comment>
<comment type="similarity">
    <text evidence="1">Belongs to the KdsB family.</text>
</comment>
<name>KDSB_RHOPB</name>
<proteinExistence type="inferred from homology"/>